<proteinExistence type="inferred from homology"/>
<gene>
    <name evidence="1" type="primary">rfcL</name>
    <name type="ordered locus">UNCMA_12400</name>
    <name type="ORF">RCIX1805</name>
</gene>
<accession>Q0W3P4</accession>
<dbReference type="EMBL" id="AM114193">
    <property type="protein sequence ID" value="CAJ36999.1"/>
    <property type="molecule type" value="Genomic_DNA"/>
</dbReference>
<dbReference type="RefSeq" id="WP_012035568.1">
    <property type="nucleotide sequence ID" value="NC_009464.1"/>
</dbReference>
<dbReference type="SMR" id="Q0W3P4"/>
<dbReference type="STRING" id="351160.RCIX1805"/>
<dbReference type="GeneID" id="5143194"/>
<dbReference type="KEGG" id="rci:RCIX1805"/>
<dbReference type="PATRIC" id="fig|351160.9.peg.1276"/>
<dbReference type="eggNOG" id="arCOG00470">
    <property type="taxonomic scope" value="Archaea"/>
</dbReference>
<dbReference type="OrthoDB" id="8658at2157"/>
<dbReference type="Proteomes" id="UP000000663">
    <property type="component" value="Chromosome"/>
</dbReference>
<dbReference type="GO" id="GO:0005524">
    <property type="term" value="F:ATP binding"/>
    <property type="evidence" value="ECO:0007669"/>
    <property type="project" value="UniProtKB-UniRule"/>
</dbReference>
<dbReference type="GO" id="GO:0016887">
    <property type="term" value="F:ATP hydrolysis activity"/>
    <property type="evidence" value="ECO:0007669"/>
    <property type="project" value="InterPro"/>
</dbReference>
<dbReference type="GO" id="GO:0003689">
    <property type="term" value="F:DNA clamp loader activity"/>
    <property type="evidence" value="ECO:0007669"/>
    <property type="project" value="UniProtKB-UniRule"/>
</dbReference>
<dbReference type="GO" id="GO:0006260">
    <property type="term" value="P:DNA replication"/>
    <property type="evidence" value="ECO:0007669"/>
    <property type="project" value="UniProtKB-UniRule"/>
</dbReference>
<dbReference type="CDD" id="cd00009">
    <property type="entry name" value="AAA"/>
    <property type="match status" value="1"/>
</dbReference>
<dbReference type="CDD" id="cd18140">
    <property type="entry name" value="HLD_clamp_RFC"/>
    <property type="match status" value="1"/>
</dbReference>
<dbReference type="Gene3D" id="1.10.8.60">
    <property type="match status" value="1"/>
</dbReference>
<dbReference type="Gene3D" id="3.40.50.300">
    <property type="entry name" value="P-loop containing nucleotide triphosphate hydrolases"/>
    <property type="match status" value="1"/>
</dbReference>
<dbReference type="HAMAP" id="MF_01508">
    <property type="entry name" value="RfcL"/>
    <property type="match status" value="1"/>
</dbReference>
<dbReference type="InterPro" id="IPR003593">
    <property type="entry name" value="AAA+_ATPase"/>
</dbReference>
<dbReference type="InterPro" id="IPR003959">
    <property type="entry name" value="ATPase_AAA_core"/>
</dbReference>
<dbReference type="InterPro" id="IPR027417">
    <property type="entry name" value="P-loop_NTPase"/>
</dbReference>
<dbReference type="InterPro" id="IPR023935">
    <property type="entry name" value="Rep_factor-C_lsu"/>
</dbReference>
<dbReference type="InterPro" id="IPR047854">
    <property type="entry name" value="RFC_lid"/>
</dbReference>
<dbReference type="NCBIfam" id="NF003228">
    <property type="entry name" value="PRK04195.1-4"/>
    <property type="match status" value="1"/>
</dbReference>
<dbReference type="NCBIfam" id="NF003229">
    <property type="entry name" value="PRK04195.1-5"/>
    <property type="match status" value="1"/>
</dbReference>
<dbReference type="NCBIfam" id="NF003231">
    <property type="entry name" value="PRK04195.2-1"/>
    <property type="match status" value="1"/>
</dbReference>
<dbReference type="PANTHER" id="PTHR23389">
    <property type="entry name" value="CHROMOSOME TRANSMISSION FIDELITY FACTOR 18"/>
    <property type="match status" value="1"/>
</dbReference>
<dbReference type="PANTHER" id="PTHR23389:SF6">
    <property type="entry name" value="REPLICATION FACTOR C SUBUNIT 1"/>
    <property type="match status" value="1"/>
</dbReference>
<dbReference type="Pfam" id="PF00004">
    <property type="entry name" value="AAA"/>
    <property type="match status" value="1"/>
</dbReference>
<dbReference type="Pfam" id="PF21960">
    <property type="entry name" value="RCF1-5-like_lid"/>
    <property type="match status" value="1"/>
</dbReference>
<dbReference type="SMART" id="SM00382">
    <property type="entry name" value="AAA"/>
    <property type="match status" value="1"/>
</dbReference>
<dbReference type="SUPFAM" id="SSF52540">
    <property type="entry name" value="P-loop containing nucleoside triphosphate hydrolases"/>
    <property type="match status" value="1"/>
</dbReference>
<comment type="function">
    <text evidence="1">Part of the RFC clamp loader complex which loads the PCNA sliding clamp onto DNA.</text>
</comment>
<comment type="subunit">
    <text evidence="1">Heteromultimer composed of small subunits (RfcS) and large subunits (RfcL).</text>
</comment>
<comment type="similarity">
    <text evidence="1">Belongs to the activator 1 small subunits family. RfcL subfamily.</text>
</comment>
<organism>
    <name type="scientific">Methanocella arvoryzae (strain DSM 22066 / NBRC 105507 / MRE50)</name>
    <dbReference type="NCBI Taxonomy" id="351160"/>
    <lineage>
        <taxon>Archaea</taxon>
        <taxon>Methanobacteriati</taxon>
        <taxon>Methanobacteriota</taxon>
        <taxon>Stenosarchaea group</taxon>
        <taxon>Methanomicrobia</taxon>
        <taxon>Methanocellales</taxon>
        <taxon>Methanocellaceae</taxon>
        <taxon>Methanocella</taxon>
    </lineage>
</organism>
<feature type="chain" id="PRO_0000292187" description="Replication factor C large subunit">
    <location>
        <begin position="1"/>
        <end position="553"/>
    </location>
</feature>
<feature type="region of interest" description="Disordered" evidence="2">
    <location>
        <begin position="438"/>
        <end position="553"/>
    </location>
</feature>
<feature type="compositionally biased region" description="Basic and acidic residues" evidence="2">
    <location>
        <begin position="442"/>
        <end position="451"/>
    </location>
</feature>
<feature type="compositionally biased region" description="Low complexity" evidence="2">
    <location>
        <begin position="503"/>
        <end position="513"/>
    </location>
</feature>
<feature type="compositionally biased region" description="Basic and acidic residues" evidence="2">
    <location>
        <begin position="532"/>
        <end position="553"/>
    </location>
</feature>
<feature type="binding site" evidence="1">
    <location>
        <begin position="50"/>
        <end position="57"/>
    </location>
    <ligand>
        <name>ATP</name>
        <dbReference type="ChEBI" id="CHEBI:30616"/>
    </ligand>
</feature>
<name>RFCL_METAR</name>
<keyword id="KW-0067">ATP-binding</keyword>
<keyword id="KW-0235">DNA replication</keyword>
<keyword id="KW-0547">Nucleotide-binding</keyword>
<keyword id="KW-1185">Reference proteome</keyword>
<sequence length="553" mass="61066">MTADNDTRDWTEKYRPVSLADIVGNDAAVKALRQWAETFGTGKKAVILYGGPGVGKTSAALALAHDMGWDYIELNASDVRTKDAINRIAGPAAMAGTFEGTGGRRLVILDEADNLHGNYDRGGEAAIINVIRNASQPVILIANDMYAMSKPLRESALQIQFRAILSTSVAKVLRKVCANEGLKCDPEALMKIAERTNDLRSAINDLQAAAQGSGQVTVADVSTGDRDVPETIFKVMGMIFRGKNMREALNATYGLDENPEDLIGWVDENLPREYQDDDLERGFEALSRADVYLGRTRRRQDYGMWRYAGFMMVCGVNRARRRHYGGFSRYSPPTYWQKLGRAKSTRVTRDSIAAKVGKACHCSKAEARSTYLPLLRFLFDKDEYAIRLSAQLKLEEDEIAFLLDAKKASKKVGEIYKKSRALIEEEIEEEIDLFARFGKRPGKPEAGEPRESLFMAGEEEEKPSREKSAKLDAFGEIEKPKRKRRKAPDGGAPIEDGPEEPGEAPMAAAMPAATESFGPAGAPAPQESPLPEPEKPPAAEDKCSKKQRTLFDF</sequence>
<protein>
    <recommendedName>
        <fullName evidence="1">Replication factor C large subunit</fullName>
        <shortName evidence="1">RFC large subunit</shortName>
    </recommendedName>
    <alternativeName>
        <fullName evidence="1">Clamp loader large subunit</fullName>
    </alternativeName>
</protein>
<reference key="1">
    <citation type="journal article" date="2006" name="Science">
        <title>Genome of rice cluster I archaea -- the key methane producers in the rice rhizosphere.</title>
        <authorList>
            <person name="Erkel C."/>
            <person name="Kube M."/>
            <person name="Reinhardt R."/>
            <person name="Liesack W."/>
        </authorList>
    </citation>
    <scope>NUCLEOTIDE SEQUENCE [LARGE SCALE GENOMIC DNA]</scope>
    <source>
        <strain>DSM 22066 / NBRC 105507 / MRE50</strain>
    </source>
</reference>
<evidence type="ECO:0000255" key="1">
    <source>
        <dbReference type="HAMAP-Rule" id="MF_01508"/>
    </source>
</evidence>
<evidence type="ECO:0000256" key="2">
    <source>
        <dbReference type="SAM" id="MobiDB-lite"/>
    </source>
</evidence>